<gene>
    <name evidence="1" type="primary">recU</name>
    <name type="ordered locus">SEQ_1789</name>
</gene>
<organism>
    <name type="scientific">Streptococcus equi subsp. equi (strain 4047)</name>
    <dbReference type="NCBI Taxonomy" id="553482"/>
    <lineage>
        <taxon>Bacteria</taxon>
        <taxon>Bacillati</taxon>
        <taxon>Bacillota</taxon>
        <taxon>Bacilli</taxon>
        <taxon>Lactobacillales</taxon>
        <taxon>Streptococcaceae</taxon>
        <taxon>Streptococcus</taxon>
    </lineage>
</organism>
<accession>C0M792</accession>
<sequence length="202" mass="23349">MVNYPHNPIRQKVTPLQKQQKHKQVDFANRGMSFEASINATNAYYLAKGIAVIHKKPTPIQIVKVDYPRRSRAKIVEAYFKQASTTDYSGIYKGHYIDFEAKETRQKTAMPMKNFHAHQIEHMAAVLKQKGICFVLLHFATLKETYYLPAKALIDFYQIDRGNKSMPLDYIRKNGFEVKLGAFPQVPYLDIIEQKFLGGDYN</sequence>
<keyword id="KW-0963">Cytoplasm</keyword>
<keyword id="KW-0227">DNA damage</keyword>
<keyword id="KW-0233">DNA recombination</keyword>
<keyword id="KW-0234">DNA repair</keyword>
<keyword id="KW-0255">Endonuclease</keyword>
<keyword id="KW-0378">Hydrolase</keyword>
<keyword id="KW-0460">Magnesium</keyword>
<keyword id="KW-0479">Metal-binding</keyword>
<keyword id="KW-0540">Nuclease</keyword>
<reference key="1">
    <citation type="journal article" date="2009" name="PLoS Pathog.">
        <title>Genomic evidence for the evolution of Streptococcus equi: host restriction, increased virulence, and genetic exchange with human pathogens.</title>
        <authorList>
            <person name="Holden M.T.G."/>
            <person name="Heather Z."/>
            <person name="Paillot R."/>
            <person name="Steward K.F."/>
            <person name="Webb K."/>
            <person name="Ainslie F."/>
            <person name="Jourdan T."/>
            <person name="Bason N.C."/>
            <person name="Holroyd N.E."/>
            <person name="Mungall K."/>
            <person name="Quail M.A."/>
            <person name="Sanders M."/>
            <person name="Simmonds M."/>
            <person name="Willey D."/>
            <person name="Brooks K."/>
            <person name="Aanensen D.M."/>
            <person name="Spratt B.G."/>
            <person name="Jolley K.A."/>
            <person name="Maiden M.C.J."/>
            <person name="Kehoe M."/>
            <person name="Chanter N."/>
            <person name="Bentley S.D."/>
            <person name="Robinson C."/>
            <person name="Maskell D.J."/>
            <person name="Parkhill J."/>
            <person name="Waller A.S."/>
        </authorList>
    </citation>
    <scope>NUCLEOTIDE SEQUENCE [LARGE SCALE GENOMIC DNA]</scope>
    <source>
        <strain>4047</strain>
    </source>
</reference>
<name>RECU_STRE4</name>
<comment type="function">
    <text evidence="1">Endonuclease that resolves Holliday junction intermediates in genetic recombination. Cleaves mobile four-strand junctions by introducing symmetrical nicks in paired strands. Promotes annealing of linear ssDNA with homologous dsDNA. Required for DNA repair, homologous recombination and chromosome segregation.</text>
</comment>
<comment type="catalytic activity">
    <reaction evidence="1">
        <text>Endonucleolytic cleavage at a junction such as a reciprocal single-stranded crossover between two homologous DNA duplexes (Holliday junction).</text>
        <dbReference type="EC" id="3.1.21.10"/>
    </reaction>
</comment>
<comment type="cofactor">
    <cofactor evidence="1">
        <name>Mg(2+)</name>
        <dbReference type="ChEBI" id="CHEBI:18420"/>
    </cofactor>
    <text evidence="1">Binds 1 Mg(2+) ion per subunit.</text>
</comment>
<comment type="subcellular location">
    <subcellularLocation>
        <location evidence="1">Cytoplasm</location>
    </subcellularLocation>
</comment>
<comment type="similarity">
    <text evidence="1">Belongs to the RecU family.</text>
</comment>
<evidence type="ECO:0000255" key="1">
    <source>
        <dbReference type="HAMAP-Rule" id="MF_00130"/>
    </source>
</evidence>
<protein>
    <recommendedName>
        <fullName evidence="1">Holliday junction resolvase RecU</fullName>
        <ecNumber evidence="1">3.1.21.10</ecNumber>
    </recommendedName>
    <alternativeName>
        <fullName evidence="1">Recombination protein U homolog</fullName>
    </alternativeName>
</protein>
<dbReference type="EC" id="3.1.21.10" evidence="1"/>
<dbReference type="EMBL" id="FM204883">
    <property type="protein sequence ID" value="CAW94911.1"/>
    <property type="molecule type" value="Genomic_DNA"/>
</dbReference>
<dbReference type="RefSeq" id="WP_012680006.1">
    <property type="nucleotide sequence ID" value="NC_012471.1"/>
</dbReference>
<dbReference type="SMR" id="C0M792"/>
<dbReference type="KEGG" id="seu:SEQ_1789"/>
<dbReference type="HOGENOM" id="CLU_096340_0_0_9"/>
<dbReference type="OrthoDB" id="9783592at2"/>
<dbReference type="Proteomes" id="UP000001365">
    <property type="component" value="Chromosome"/>
</dbReference>
<dbReference type="GO" id="GO:0005737">
    <property type="term" value="C:cytoplasm"/>
    <property type="evidence" value="ECO:0007669"/>
    <property type="project" value="UniProtKB-SubCell"/>
</dbReference>
<dbReference type="GO" id="GO:0004519">
    <property type="term" value="F:endonuclease activity"/>
    <property type="evidence" value="ECO:0007669"/>
    <property type="project" value="UniProtKB-UniRule"/>
</dbReference>
<dbReference type="GO" id="GO:0000287">
    <property type="term" value="F:magnesium ion binding"/>
    <property type="evidence" value="ECO:0007669"/>
    <property type="project" value="UniProtKB-UniRule"/>
</dbReference>
<dbReference type="GO" id="GO:0003676">
    <property type="term" value="F:nucleic acid binding"/>
    <property type="evidence" value="ECO:0007669"/>
    <property type="project" value="InterPro"/>
</dbReference>
<dbReference type="GO" id="GO:0007059">
    <property type="term" value="P:chromosome segregation"/>
    <property type="evidence" value="ECO:0007669"/>
    <property type="project" value="UniProtKB-UniRule"/>
</dbReference>
<dbReference type="GO" id="GO:0006310">
    <property type="term" value="P:DNA recombination"/>
    <property type="evidence" value="ECO:0007669"/>
    <property type="project" value="UniProtKB-UniRule"/>
</dbReference>
<dbReference type="GO" id="GO:0006281">
    <property type="term" value="P:DNA repair"/>
    <property type="evidence" value="ECO:0007669"/>
    <property type="project" value="UniProtKB-UniRule"/>
</dbReference>
<dbReference type="CDD" id="cd22354">
    <property type="entry name" value="RecU-like"/>
    <property type="match status" value="1"/>
</dbReference>
<dbReference type="Gene3D" id="3.40.1350.10">
    <property type="match status" value="1"/>
</dbReference>
<dbReference type="HAMAP" id="MF_00130">
    <property type="entry name" value="RecU"/>
    <property type="match status" value="1"/>
</dbReference>
<dbReference type="InterPro" id="IPR004612">
    <property type="entry name" value="Resolv_RecU"/>
</dbReference>
<dbReference type="InterPro" id="IPR011335">
    <property type="entry name" value="Restrct_endonuc-II-like"/>
</dbReference>
<dbReference type="InterPro" id="IPR011856">
    <property type="entry name" value="tRNA_endonuc-like_dom_sf"/>
</dbReference>
<dbReference type="NCBIfam" id="NF002580">
    <property type="entry name" value="PRK02234.1-1"/>
    <property type="match status" value="1"/>
</dbReference>
<dbReference type="NCBIfam" id="NF002584">
    <property type="entry name" value="PRK02234.1-5"/>
    <property type="match status" value="1"/>
</dbReference>
<dbReference type="NCBIfam" id="TIGR00648">
    <property type="entry name" value="recU"/>
    <property type="match status" value="1"/>
</dbReference>
<dbReference type="Pfam" id="PF03838">
    <property type="entry name" value="RecU"/>
    <property type="match status" value="1"/>
</dbReference>
<dbReference type="PIRSF" id="PIRSF037785">
    <property type="entry name" value="RecU"/>
    <property type="match status" value="1"/>
</dbReference>
<dbReference type="SUPFAM" id="SSF52980">
    <property type="entry name" value="Restriction endonuclease-like"/>
    <property type="match status" value="1"/>
</dbReference>
<proteinExistence type="inferred from homology"/>
<feature type="chain" id="PRO_1000193441" description="Holliday junction resolvase RecU">
    <location>
        <begin position="1"/>
        <end position="202"/>
    </location>
</feature>
<feature type="binding site" evidence="1">
    <location>
        <position position="85"/>
    </location>
    <ligand>
        <name>Mg(2+)</name>
        <dbReference type="ChEBI" id="CHEBI:18420"/>
    </ligand>
</feature>
<feature type="binding site" evidence="1">
    <location>
        <position position="87"/>
    </location>
    <ligand>
        <name>Mg(2+)</name>
        <dbReference type="ChEBI" id="CHEBI:18420"/>
    </ligand>
</feature>
<feature type="binding site" evidence="1">
    <location>
        <position position="100"/>
    </location>
    <ligand>
        <name>Mg(2+)</name>
        <dbReference type="ChEBI" id="CHEBI:18420"/>
    </ligand>
</feature>
<feature type="binding site" evidence="1">
    <location>
        <position position="119"/>
    </location>
    <ligand>
        <name>Mg(2+)</name>
        <dbReference type="ChEBI" id="CHEBI:18420"/>
    </ligand>
</feature>
<feature type="site" description="Transition state stabilizer" evidence="1">
    <location>
        <position position="102"/>
    </location>
</feature>